<proteinExistence type="inferred from homology"/>
<dbReference type="EC" id="1.3.5.1"/>
<dbReference type="EMBL" id="X62762">
    <property type="protein sequence ID" value="CAA44612.1"/>
    <property type="molecule type" value="Genomic_DNA"/>
</dbReference>
<dbReference type="EMBL" id="Z11738">
    <property type="protein sequence ID" value="CAA77798.1"/>
    <property type="molecule type" value="Genomic_DNA"/>
</dbReference>
<dbReference type="EMBL" id="CM003141">
    <property type="protein sequence ID" value="KIS70918.1"/>
    <property type="molecule type" value="Genomic_DNA"/>
</dbReference>
<dbReference type="PIR" id="S26978">
    <property type="entry name" value="S26978"/>
</dbReference>
<dbReference type="RefSeq" id="XP_011386878.1">
    <property type="nucleotide sequence ID" value="XM_011388576.1"/>
</dbReference>
<dbReference type="SMR" id="P32420"/>
<dbReference type="FunCoup" id="P32420">
    <property type="interactions" value="296"/>
</dbReference>
<dbReference type="STRING" id="237631.P32420"/>
<dbReference type="EnsemblFungi" id="KIS70918">
    <property type="protein sequence ID" value="KIS70918"/>
    <property type="gene ID" value="UMAG_00844"/>
</dbReference>
<dbReference type="GeneID" id="23562034"/>
<dbReference type="KEGG" id="uma:UMAG_00844"/>
<dbReference type="VEuPathDB" id="FungiDB:UMAG_00844"/>
<dbReference type="eggNOG" id="KOG3049">
    <property type="taxonomic scope" value="Eukaryota"/>
</dbReference>
<dbReference type="HOGENOM" id="CLU_044838_0_2_1"/>
<dbReference type="InParanoid" id="P32420"/>
<dbReference type="OMA" id="DGQYFGP"/>
<dbReference type="OrthoDB" id="1696654at2759"/>
<dbReference type="UniPathway" id="UPA00223">
    <property type="reaction ID" value="UER01006"/>
</dbReference>
<dbReference type="Proteomes" id="UP000000561">
    <property type="component" value="Chromosome 2"/>
</dbReference>
<dbReference type="GO" id="GO:0005743">
    <property type="term" value="C:mitochondrial inner membrane"/>
    <property type="evidence" value="ECO:0007669"/>
    <property type="project" value="UniProtKB-SubCell"/>
</dbReference>
<dbReference type="GO" id="GO:0031966">
    <property type="term" value="C:mitochondrial membrane"/>
    <property type="evidence" value="ECO:0000318"/>
    <property type="project" value="GO_Central"/>
</dbReference>
<dbReference type="GO" id="GO:0045273">
    <property type="term" value="C:respiratory chain complex II (succinate dehydrogenase)"/>
    <property type="evidence" value="ECO:0007669"/>
    <property type="project" value="EnsemblFungi"/>
</dbReference>
<dbReference type="GO" id="GO:0051537">
    <property type="term" value="F:2 iron, 2 sulfur cluster binding"/>
    <property type="evidence" value="ECO:0007669"/>
    <property type="project" value="UniProtKB-KW"/>
</dbReference>
<dbReference type="GO" id="GO:0051538">
    <property type="term" value="F:3 iron, 4 sulfur cluster binding"/>
    <property type="evidence" value="ECO:0007669"/>
    <property type="project" value="UniProtKB-KW"/>
</dbReference>
<dbReference type="GO" id="GO:0051539">
    <property type="term" value="F:4 iron, 4 sulfur cluster binding"/>
    <property type="evidence" value="ECO:0007669"/>
    <property type="project" value="UniProtKB-KW"/>
</dbReference>
<dbReference type="GO" id="GO:0009055">
    <property type="term" value="F:electron transfer activity"/>
    <property type="evidence" value="ECO:0007669"/>
    <property type="project" value="InterPro"/>
</dbReference>
<dbReference type="GO" id="GO:0046872">
    <property type="term" value="F:metal ion binding"/>
    <property type="evidence" value="ECO:0007669"/>
    <property type="project" value="UniProtKB-KW"/>
</dbReference>
<dbReference type="GO" id="GO:0008177">
    <property type="term" value="F:succinate dehydrogenase (quinone) activity"/>
    <property type="evidence" value="ECO:0007669"/>
    <property type="project" value="UniProtKB-EC"/>
</dbReference>
<dbReference type="GO" id="GO:0009060">
    <property type="term" value="P:aerobic respiration"/>
    <property type="evidence" value="ECO:0000318"/>
    <property type="project" value="GO_Central"/>
</dbReference>
<dbReference type="GO" id="GO:0006121">
    <property type="term" value="P:mitochondrial electron transport, succinate to ubiquinone"/>
    <property type="evidence" value="ECO:0007669"/>
    <property type="project" value="EnsemblFungi"/>
</dbReference>
<dbReference type="GO" id="GO:0022904">
    <property type="term" value="P:respiratory electron transport chain"/>
    <property type="evidence" value="ECO:0000318"/>
    <property type="project" value="GO_Central"/>
</dbReference>
<dbReference type="GO" id="GO:0006099">
    <property type="term" value="P:tricarboxylic acid cycle"/>
    <property type="evidence" value="ECO:0007669"/>
    <property type="project" value="UniProtKB-UniPathway"/>
</dbReference>
<dbReference type="CDD" id="cd00207">
    <property type="entry name" value="fer2"/>
    <property type="match status" value="1"/>
</dbReference>
<dbReference type="FunFam" id="3.10.20.30:FF:000007">
    <property type="entry name" value="Succinate dehydrogenase [ubiquinone] iron-sulfur subunit, mitochondrial"/>
    <property type="match status" value="1"/>
</dbReference>
<dbReference type="FunFam" id="1.10.1060.10:FF:000001">
    <property type="entry name" value="Succinate dehydrogenase iron-sulfur subunit SdhB"/>
    <property type="match status" value="1"/>
</dbReference>
<dbReference type="Gene3D" id="3.10.20.30">
    <property type="match status" value="1"/>
</dbReference>
<dbReference type="Gene3D" id="1.10.1060.10">
    <property type="entry name" value="Alpha-helical ferredoxin"/>
    <property type="match status" value="1"/>
</dbReference>
<dbReference type="InterPro" id="IPR036010">
    <property type="entry name" value="2Fe-2S_ferredoxin-like_sf"/>
</dbReference>
<dbReference type="InterPro" id="IPR001041">
    <property type="entry name" value="2Fe-2S_ferredoxin-type"/>
</dbReference>
<dbReference type="InterPro" id="IPR006058">
    <property type="entry name" value="2Fe2S_fd_BS"/>
</dbReference>
<dbReference type="InterPro" id="IPR017896">
    <property type="entry name" value="4Fe4S_Fe-S-bd"/>
</dbReference>
<dbReference type="InterPro" id="IPR017900">
    <property type="entry name" value="4Fe4S_Fe_S_CS"/>
</dbReference>
<dbReference type="InterPro" id="IPR012675">
    <property type="entry name" value="Beta-grasp_dom_sf"/>
</dbReference>
<dbReference type="InterPro" id="IPR009051">
    <property type="entry name" value="Helical_ferredxn"/>
</dbReference>
<dbReference type="InterPro" id="IPR050573">
    <property type="entry name" value="SDH/FRD_Iron-Sulfur"/>
</dbReference>
<dbReference type="InterPro" id="IPR004489">
    <property type="entry name" value="Succ_DH/fum_Rdtase_Fe-S"/>
</dbReference>
<dbReference type="InterPro" id="IPR025192">
    <property type="entry name" value="Succ_DH/fum_Rdtase_N"/>
</dbReference>
<dbReference type="NCBIfam" id="TIGR00384">
    <property type="entry name" value="dhsB"/>
    <property type="match status" value="1"/>
</dbReference>
<dbReference type="NCBIfam" id="NF004616">
    <property type="entry name" value="PRK05950.1"/>
    <property type="match status" value="1"/>
</dbReference>
<dbReference type="PANTHER" id="PTHR11921:SF29">
    <property type="entry name" value="SUCCINATE DEHYDROGENASE [UBIQUINONE] IRON-SULFUR SUBUNIT, MITOCHONDRIAL"/>
    <property type="match status" value="1"/>
</dbReference>
<dbReference type="PANTHER" id="PTHR11921">
    <property type="entry name" value="SUCCINATE DEHYDROGENASE IRON-SULFUR PROTEIN"/>
    <property type="match status" value="1"/>
</dbReference>
<dbReference type="Pfam" id="PF13085">
    <property type="entry name" value="Fer2_3"/>
    <property type="match status" value="1"/>
</dbReference>
<dbReference type="Pfam" id="PF13534">
    <property type="entry name" value="Fer4_17"/>
    <property type="match status" value="1"/>
</dbReference>
<dbReference type="SUPFAM" id="SSF54292">
    <property type="entry name" value="2Fe-2S ferredoxin-like"/>
    <property type="match status" value="1"/>
</dbReference>
<dbReference type="SUPFAM" id="SSF46548">
    <property type="entry name" value="alpha-helical ferredoxin"/>
    <property type="match status" value="1"/>
</dbReference>
<dbReference type="PROSITE" id="PS00197">
    <property type="entry name" value="2FE2S_FER_1"/>
    <property type="match status" value="1"/>
</dbReference>
<dbReference type="PROSITE" id="PS51085">
    <property type="entry name" value="2FE2S_FER_2"/>
    <property type="match status" value="1"/>
</dbReference>
<dbReference type="PROSITE" id="PS00198">
    <property type="entry name" value="4FE4S_FER_1"/>
    <property type="match status" value="1"/>
</dbReference>
<dbReference type="PROSITE" id="PS51379">
    <property type="entry name" value="4FE4S_FER_2"/>
    <property type="match status" value="1"/>
</dbReference>
<accession>P32420</accession>
<accession>A0A0D1CWY8</accession>
<accession>Q12722</accession>
<accession>Q4PGB9</accession>
<keyword id="KW-0001">2Fe-2S</keyword>
<keyword id="KW-0003">3Fe-4S</keyword>
<keyword id="KW-0004">4Fe-4S</keyword>
<keyword id="KW-0249">Electron transport</keyword>
<keyword id="KW-0408">Iron</keyword>
<keyword id="KW-0411">Iron-sulfur</keyword>
<keyword id="KW-0472">Membrane</keyword>
<keyword id="KW-0479">Metal-binding</keyword>
<keyword id="KW-0496">Mitochondrion</keyword>
<keyword id="KW-0999">Mitochondrion inner membrane</keyword>
<keyword id="KW-0560">Oxidoreductase</keyword>
<keyword id="KW-1185">Reference proteome</keyword>
<keyword id="KW-0809">Transit peptide</keyword>
<keyword id="KW-0813">Transport</keyword>
<keyword id="KW-0816">Tricarboxylic acid cycle</keyword>
<gene>
    <name type="primary">SDH2</name>
    <name type="synonym">CBXR</name>
    <name type="ORF">UMAG_00844</name>
</gene>
<evidence type="ECO:0000250" key="1"/>
<evidence type="ECO:0000255" key="2"/>
<evidence type="ECO:0000255" key="3">
    <source>
        <dbReference type="PROSITE-ProRule" id="PRU00465"/>
    </source>
</evidence>
<evidence type="ECO:0000255" key="4">
    <source>
        <dbReference type="PROSITE-ProRule" id="PRU00711"/>
    </source>
</evidence>
<evidence type="ECO:0000305" key="5"/>
<organism>
    <name type="scientific">Mycosarcoma maydis</name>
    <name type="common">Corn smut fungus</name>
    <name type="synonym">Ustilago maydis</name>
    <dbReference type="NCBI Taxonomy" id="5270"/>
    <lineage>
        <taxon>Eukaryota</taxon>
        <taxon>Fungi</taxon>
        <taxon>Dikarya</taxon>
        <taxon>Basidiomycota</taxon>
        <taxon>Ustilaginomycotina</taxon>
        <taxon>Ustilaginomycetes</taxon>
        <taxon>Ustilaginales</taxon>
        <taxon>Ustilaginaceae</taxon>
        <taxon>Mycosarcoma</taxon>
    </lineage>
</organism>
<name>SDHB_MYCMD</name>
<protein>
    <recommendedName>
        <fullName>Succinate dehydrogenase [ubiquinone] iron-sulfur subunit, mitochondrial</fullName>
        <ecNumber>1.3.5.1</ecNumber>
    </recommendedName>
    <alternativeName>
        <fullName>Iron-sulfur subunit of complex II</fullName>
        <shortName>Ip</shortName>
    </alternativeName>
</protein>
<comment type="function">
    <text evidence="1">Iron-sulfur protein (IP) subunit of succinate dehydrogenase (SDH) that is involved in complex II of the mitochondrial electron transport chain and is responsible for transferring electrons from succinate to ubiquinone (coenzyme Q).</text>
</comment>
<comment type="catalytic activity">
    <reaction>
        <text>a quinone + succinate = fumarate + a quinol</text>
        <dbReference type="Rhea" id="RHEA:40523"/>
        <dbReference type="ChEBI" id="CHEBI:24646"/>
        <dbReference type="ChEBI" id="CHEBI:29806"/>
        <dbReference type="ChEBI" id="CHEBI:30031"/>
        <dbReference type="ChEBI" id="CHEBI:132124"/>
        <dbReference type="EC" id="1.3.5.1"/>
    </reaction>
</comment>
<comment type="cofactor">
    <cofactor evidence="1">
        <name>[2Fe-2S] cluster</name>
        <dbReference type="ChEBI" id="CHEBI:190135"/>
    </cofactor>
    <text evidence="1">Binds 1 [2Fe-2S] cluster.</text>
</comment>
<comment type="cofactor">
    <cofactor evidence="1">
        <name>[3Fe-4S] cluster</name>
        <dbReference type="ChEBI" id="CHEBI:21137"/>
    </cofactor>
    <text evidence="1">Binds 1 [3Fe-4S] cluster.</text>
</comment>
<comment type="cofactor">
    <cofactor evidence="1">
        <name>[4Fe-4S] cluster</name>
        <dbReference type="ChEBI" id="CHEBI:49883"/>
    </cofactor>
    <text evidence="1">Binds 1 [4Fe-4S] cluster.</text>
</comment>
<comment type="pathway">
    <text>Carbohydrate metabolism; tricarboxylic acid cycle; fumarate from succinate (eukaryal route): step 1/1.</text>
</comment>
<comment type="subunit">
    <text evidence="1">Component of complex II composed of four subunits: a flavoprotein (FP), an iron-sulfur protein (IP), and a cytochrome b composed of a large and a small subunit.</text>
</comment>
<comment type="subcellular location">
    <subcellularLocation>
        <location evidence="1">Mitochondrion inner membrane</location>
        <topology evidence="1">Peripheral membrane protein</topology>
        <orientation evidence="1">Matrix side</orientation>
    </subcellularLocation>
</comment>
<comment type="similarity">
    <text evidence="5">Belongs to the succinate dehydrogenase/fumarate reductase iron-sulfur protein family.</text>
</comment>
<reference key="1">
    <citation type="journal article" date="1991" name="Curr. Genet.">
        <title>Isolation, characterization and sequence of a gene conferring resistance to the systemic fungicide carboxin from the maize smut pathogen, Ustilago maydis.</title>
        <authorList>
            <person name="Keon J.P.R."/>
            <person name="White G.A."/>
            <person name="Hargreaves J.A."/>
        </authorList>
    </citation>
    <scope>NUCLEOTIDE SEQUENCE [GENOMIC DNA]</scope>
    <source>
        <strain>ATCC 38509 / 92</strain>
    </source>
</reference>
<reference key="2">
    <citation type="journal article" date="1992" name="Curr. Genet.">
        <title>A single amino-acid change in the iron-sulphur protein subunit of succinate dehydrogenase confers resistance to carboxin in Ustilago maydis.</title>
        <authorList>
            <person name="Broomfield P.L.E."/>
            <person name="Hargreaves J.A."/>
        </authorList>
    </citation>
    <scope>NUCLEOTIDE SEQUENCE [GENOMIC DNA]</scope>
</reference>
<reference key="3">
    <citation type="journal article" date="2006" name="Nature">
        <title>Insights from the genome of the biotrophic fungal plant pathogen Ustilago maydis.</title>
        <authorList>
            <person name="Kaemper J."/>
            <person name="Kahmann R."/>
            <person name="Boelker M."/>
            <person name="Ma L.-J."/>
            <person name="Brefort T."/>
            <person name="Saville B.J."/>
            <person name="Banuett F."/>
            <person name="Kronstad J.W."/>
            <person name="Gold S.E."/>
            <person name="Mueller O."/>
            <person name="Perlin M.H."/>
            <person name="Woesten H.A.B."/>
            <person name="de Vries R."/>
            <person name="Ruiz-Herrera J."/>
            <person name="Reynaga-Pena C.G."/>
            <person name="Snetselaar K."/>
            <person name="McCann M."/>
            <person name="Perez-Martin J."/>
            <person name="Feldbruegge M."/>
            <person name="Basse C.W."/>
            <person name="Steinberg G."/>
            <person name="Ibeas J.I."/>
            <person name="Holloman W."/>
            <person name="Guzman P."/>
            <person name="Farman M.L."/>
            <person name="Stajich J.E."/>
            <person name="Sentandreu R."/>
            <person name="Gonzalez-Prieto J.M."/>
            <person name="Kennell J.C."/>
            <person name="Molina L."/>
            <person name="Schirawski J."/>
            <person name="Mendoza-Mendoza A."/>
            <person name="Greilinger D."/>
            <person name="Muench K."/>
            <person name="Roessel N."/>
            <person name="Scherer M."/>
            <person name="Vranes M."/>
            <person name="Ladendorf O."/>
            <person name="Vincon V."/>
            <person name="Fuchs U."/>
            <person name="Sandrock B."/>
            <person name="Meng S."/>
            <person name="Ho E.C.H."/>
            <person name="Cahill M.J."/>
            <person name="Boyce K.J."/>
            <person name="Klose J."/>
            <person name="Klosterman S.J."/>
            <person name="Deelstra H.J."/>
            <person name="Ortiz-Castellanos L."/>
            <person name="Li W."/>
            <person name="Sanchez-Alonso P."/>
            <person name="Schreier P.H."/>
            <person name="Haeuser-Hahn I."/>
            <person name="Vaupel M."/>
            <person name="Koopmann E."/>
            <person name="Friedrich G."/>
            <person name="Voss H."/>
            <person name="Schlueter T."/>
            <person name="Margolis J."/>
            <person name="Platt D."/>
            <person name="Swimmer C."/>
            <person name="Gnirke A."/>
            <person name="Chen F."/>
            <person name="Vysotskaia V."/>
            <person name="Mannhaupt G."/>
            <person name="Gueldener U."/>
            <person name="Muensterkoetter M."/>
            <person name="Haase D."/>
            <person name="Oesterheld M."/>
            <person name="Mewes H.-W."/>
            <person name="Mauceli E.W."/>
            <person name="DeCaprio D."/>
            <person name="Wade C.M."/>
            <person name="Butler J."/>
            <person name="Young S.K."/>
            <person name="Jaffe D.B."/>
            <person name="Calvo S.E."/>
            <person name="Nusbaum C."/>
            <person name="Galagan J.E."/>
            <person name="Birren B.W."/>
        </authorList>
    </citation>
    <scope>NUCLEOTIDE SEQUENCE [LARGE SCALE GENOMIC DNA]</scope>
    <source>
        <strain>DSM 14603 / FGSC 9021 / UM521</strain>
    </source>
</reference>
<reference key="4">
    <citation type="submission" date="2014-09" db="EMBL/GenBank/DDBJ databases">
        <authorList>
            <person name="Gueldener U."/>
            <person name="Muensterkoetter M."/>
            <person name="Walter M.C."/>
            <person name="Mannhaupt G."/>
            <person name="Kahmann R."/>
        </authorList>
    </citation>
    <scope>GENOME REANNOTATION</scope>
    <source>
        <strain>DSM 14603 / FGSC 9021 / UM521</strain>
    </source>
</reference>
<feature type="transit peptide" description="Mitochondrion" evidence="2">
    <location>
        <begin position="1"/>
        <end status="unknown"/>
    </location>
</feature>
<feature type="chain" id="PRO_0000010352" description="Succinate dehydrogenase [ubiquinone] iron-sulfur subunit, mitochondrial">
    <location>
        <begin status="unknown"/>
        <end position="295"/>
    </location>
</feature>
<feature type="domain" description="2Fe-2S ferredoxin-type" evidence="3">
    <location>
        <begin position="67"/>
        <end position="144"/>
    </location>
</feature>
<feature type="domain" description="4Fe-4S ferredoxin-type" evidence="4">
    <location>
        <begin position="185"/>
        <end position="215"/>
    </location>
</feature>
<feature type="binding site" evidence="1">
    <location>
        <position position="106"/>
    </location>
    <ligand>
        <name>[2Fe-2S] cluster</name>
        <dbReference type="ChEBI" id="CHEBI:190135"/>
    </ligand>
</feature>
<feature type="binding site" evidence="1">
    <location>
        <position position="111"/>
    </location>
    <ligand>
        <name>[2Fe-2S] cluster</name>
        <dbReference type="ChEBI" id="CHEBI:190135"/>
    </ligand>
</feature>
<feature type="binding site" evidence="1">
    <location>
        <position position="114"/>
    </location>
    <ligand>
        <name>[2Fe-2S] cluster</name>
        <dbReference type="ChEBI" id="CHEBI:190135"/>
    </ligand>
</feature>
<feature type="binding site" evidence="1">
    <location>
        <position position="126"/>
    </location>
    <ligand>
        <name>[2Fe-2S] cluster</name>
        <dbReference type="ChEBI" id="CHEBI:190135"/>
    </ligand>
</feature>
<feature type="binding site" evidence="1">
    <location>
        <position position="195"/>
    </location>
    <ligand>
        <name>[4Fe-4S] cluster</name>
        <dbReference type="ChEBI" id="CHEBI:49883"/>
    </ligand>
</feature>
<feature type="binding site" evidence="1">
    <location>
        <position position="198"/>
    </location>
    <ligand>
        <name>[4Fe-4S] cluster</name>
        <dbReference type="ChEBI" id="CHEBI:49883"/>
    </ligand>
</feature>
<feature type="binding site" evidence="1">
    <location>
        <position position="201"/>
    </location>
    <ligand>
        <name>[4Fe-4S] cluster</name>
        <dbReference type="ChEBI" id="CHEBI:49883"/>
    </ligand>
</feature>
<feature type="binding site" evidence="1">
    <location>
        <position position="205"/>
    </location>
    <ligand>
        <name>[3Fe-4S] cluster</name>
        <dbReference type="ChEBI" id="CHEBI:21137"/>
    </ligand>
</feature>
<feature type="binding site" evidence="1">
    <location>
        <position position="210"/>
    </location>
    <ligand>
        <name>a ubiquinone</name>
        <dbReference type="ChEBI" id="CHEBI:16389"/>
        <note>ligand shared with DHSD</note>
    </ligand>
</feature>
<feature type="binding site" evidence="1">
    <location>
        <position position="252"/>
    </location>
    <ligand>
        <name>[3Fe-4S] cluster</name>
        <dbReference type="ChEBI" id="CHEBI:21137"/>
    </ligand>
</feature>
<feature type="binding site" evidence="1">
    <location>
        <position position="258"/>
    </location>
    <ligand>
        <name>[3Fe-4S] cluster</name>
        <dbReference type="ChEBI" id="CHEBI:21137"/>
    </ligand>
</feature>
<feature type="binding site" evidence="1">
    <location>
        <position position="262"/>
    </location>
    <ligand>
        <name>[4Fe-4S] cluster</name>
        <dbReference type="ChEBI" id="CHEBI:49883"/>
    </ligand>
</feature>
<feature type="sequence variant" description="In carboxin-resistant mutant.">
    <original>H</original>
    <variation>L</variation>
    <location>
        <position position="253"/>
    </location>
</feature>
<sequence length="295" mass="33282">MSLFNVSNGLRTALRPSVASSSRVAAFSTTAAARLATPTSDNVGSSGKPQHLKQFKIYRWNPDKPSEKPRLQSYTLDLNQTGPMVLDALIKIKNEIDPTLTFRRSCREGICGSCAMNIDGVNTLACLCRIDKQNDTKIYPLPHMYIVKDLVPDLTQFYKQYRSIEPFLKSNNTPSEGEHLQSPEERRRLDGLYECILCACCSTSCPSYWWNQDEYLGPAVLMQAYRWMADSRDDFGEERRQKLENTFSLYRCHTIMNCSRTCPKNLNPGKAIAQIKKDMAVGAPKASERPIMASS</sequence>